<keyword id="KW-1185">Reference proteome</keyword>
<name>Y105_ENCCU</name>
<reference key="1">
    <citation type="journal article" date="2001" name="Genome Res.">
        <title>Sequence and analysis of chromosome I of the amitochondriate intracellular parasite Encephalitozoon cuniculi (Microspora).</title>
        <authorList>
            <person name="Peyret P."/>
            <person name="Katinka M.D."/>
            <person name="Duprat S."/>
            <person name="Duffieux F."/>
            <person name="Barbe V."/>
            <person name="Barbazanges M."/>
            <person name="Weissenbach J."/>
            <person name="Saurin W."/>
            <person name="Vivares C.P."/>
        </authorList>
    </citation>
    <scope>NUCLEOTIDE SEQUENCE [LARGE SCALE GENOMIC DNA]</scope>
    <source>
        <strain>GB-M1</strain>
    </source>
</reference>
<reference key="2">
    <citation type="journal article" date="2001" name="Nature">
        <title>Genome sequence and gene compaction of the eukaryote parasite Encephalitozoon cuniculi.</title>
        <authorList>
            <person name="Katinka M.D."/>
            <person name="Duprat S."/>
            <person name="Cornillot E."/>
            <person name="Metenier G."/>
            <person name="Thomarat F."/>
            <person name="Prensier G."/>
            <person name="Barbe V."/>
            <person name="Peyretaillade E."/>
            <person name="Brottier P."/>
            <person name="Wincker P."/>
            <person name="Delbac F."/>
            <person name="El Alaoui H."/>
            <person name="Peyret P."/>
            <person name="Saurin W."/>
            <person name="Gouy M."/>
            <person name="Weissenbach J."/>
            <person name="Vivares C.P."/>
        </authorList>
    </citation>
    <scope>NUCLEOTIDE SEQUENCE [LARGE SCALE GENOMIC DNA]</scope>
    <source>
        <strain>GB-M1</strain>
    </source>
</reference>
<reference key="3">
    <citation type="journal article" date="2009" name="BMC Genomics">
        <title>Identification of transcriptional signals in Encephalitozoon cuniculi widespread among Microsporidia phylum: support for accurate structural genome annotation.</title>
        <authorList>
            <person name="Peyretaillade E."/>
            <person name="Goncalves O."/>
            <person name="Terrat S."/>
            <person name="Dugat-Bony E."/>
            <person name="Wincker P."/>
            <person name="Cornman R.S."/>
            <person name="Evans J.D."/>
            <person name="Delbac F."/>
            <person name="Peyret P."/>
        </authorList>
    </citation>
    <scope>GENOME REANNOTATION</scope>
    <source>
        <strain>GB-M1</strain>
    </source>
</reference>
<comment type="similarity">
    <text evidence="2">Belongs to the UPF0328 family.</text>
</comment>
<protein>
    <recommendedName>
        <fullName>UPF0328 protein ECU01_0050/ECU01_1560</fullName>
    </recommendedName>
</protein>
<organism>
    <name type="scientific">Encephalitozoon cuniculi (strain GB-M1)</name>
    <name type="common">Microsporidian parasite</name>
    <dbReference type="NCBI Taxonomy" id="284813"/>
    <lineage>
        <taxon>Eukaryota</taxon>
        <taxon>Fungi</taxon>
        <taxon>Fungi incertae sedis</taxon>
        <taxon>Microsporidia</taxon>
        <taxon>Unikaryonidae</taxon>
        <taxon>Encephalitozoon</taxon>
    </lineage>
</organism>
<sequence>MPRPASHLAPMPSDHPDFRSKSARLRCQPPRTNNCGTFKQPPSVAATSRPKPGNPFLQPPTKGTPPPKKKKKNHTEGCHTHEANPEPNTKHTETESPKPQTSTQHHTPITIPSSLLSQNTQREKRGLPLLTSRPSTIPANTYQPQSPHIHSHTPLQRPISTALLHQNLHIRARNIRHTGRLHGSPTKGAQTAQQAQPHPPKQLATL</sequence>
<accession>P0CT02</accession>
<accession>Q8STH9</accession>
<feature type="chain" id="PRO_0000422376" description="UPF0328 protein ECU01_0050/ECU01_1560">
    <location>
        <begin position="1"/>
        <end position="206"/>
    </location>
</feature>
<feature type="region of interest" description="Disordered" evidence="1">
    <location>
        <begin position="1"/>
        <end position="153"/>
    </location>
</feature>
<feature type="region of interest" description="Disordered" evidence="1">
    <location>
        <begin position="179"/>
        <end position="206"/>
    </location>
</feature>
<feature type="compositionally biased region" description="Basic and acidic residues" evidence="1">
    <location>
        <begin position="74"/>
        <end position="96"/>
    </location>
</feature>
<feature type="compositionally biased region" description="Polar residues" evidence="1">
    <location>
        <begin position="97"/>
        <end position="120"/>
    </location>
</feature>
<feature type="compositionally biased region" description="Polar residues" evidence="1">
    <location>
        <begin position="132"/>
        <end position="148"/>
    </location>
</feature>
<gene>
    <name type="ordered locus">ECU01_0050</name>
</gene>
<gene>
    <name type="ordered locus">ECU01_1560</name>
</gene>
<proteinExistence type="inferred from homology"/>
<evidence type="ECO:0000256" key="1">
    <source>
        <dbReference type="SAM" id="MobiDB-lite"/>
    </source>
</evidence>
<evidence type="ECO:0000305" key="2"/>
<dbReference type="EMBL" id="AL391737">
    <property type="protein sequence ID" value="CAD24877.2"/>
    <property type="molecule type" value="Genomic_DNA"/>
</dbReference>
<dbReference type="EMBL" id="AL391737">
    <property type="protein sequence ID" value="CAD25027.2"/>
    <property type="molecule type" value="Genomic_DNA"/>
</dbReference>
<dbReference type="RefSeq" id="NP_001402093.1">
    <property type="nucleotide sequence ID" value="NM_001415557.1"/>
</dbReference>
<dbReference type="RefSeq" id="XP_965842.1">
    <property type="nucleotide sequence ID" value="XM_960749.1"/>
</dbReference>
<dbReference type="RefSeq" id="XP_965992.1">
    <property type="nucleotide sequence ID" value="XM_960899.1"/>
</dbReference>
<dbReference type="GeneID" id="860178"/>
<dbReference type="VEuPathDB" id="MicrosporidiaDB:ECU01_0050"/>
<dbReference type="VEuPathDB" id="MicrosporidiaDB:ECU01_1560"/>
<dbReference type="HOGENOM" id="CLU_1331943_0_0_1"/>
<dbReference type="InParanoid" id="P0CT02"/>
<dbReference type="Proteomes" id="UP000000819">
    <property type="component" value="Chromosome I"/>
</dbReference>